<proteinExistence type="inferred from homology"/>
<accession>B4T5I5</accession>
<organism>
    <name type="scientific">Salmonella newport (strain SL254)</name>
    <dbReference type="NCBI Taxonomy" id="423368"/>
    <lineage>
        <taxon>Bacteria</taxon>
        <taxon>Pseudomonadati</taxon>
        <taxon>Pseudomonadota</taxon>
        <taxon>Gammaproteobacteria</taxon>
        <taxon>Enterobacterales</taxon>
        <taxon>Enterobacteriaceae</taxon>
        <taxon>Salmonella</taxon>
    </lineage>
</organism>
<keyword id="KW-0378">Hydrolase</keyword>
<keyword id="KW-0464">Manganese</keyword>
<keyword id="KW-0479">Metal-binding</keyword>
<keyword id="KW-0620">Polyamine biosynthesis</keyword>
<keyword id="KW-0661">Putrescine biosynthesis</keyword>
<keyword id="KW-0745">Spermidine biosynthesis</keyword>
<protein>
    <recommendedName>
        <fullName evidence="1">Agmatinase</fullName>
        <ecNumber evidence="1">3.5.3.11</ecNumber>
    </recommendedName>
    <alternativeName>
        <fullName evidence="1">Agmatine ureohydrolase</fullName>
        <shortName evidence="1">AUH</shortName>
    </alternativeName>
</protein>
<feature type="chain" id="PRO_1000145624" description="Agmatinase">
    <location>
        <begin position="1"/>
        <end position="306"/>
    </location>
</feature>
<feature type="binding site" evidence="1">
    <location>
        <position position="126"/>
    </location>
    <ligand>
        <name>Mn(2+)</name>
        <dbReference type="ChEBI" id="CHEBI:29035"/>
    </ligand>
</feature>
<feature type="binding site" evidence="1">
    <location>
        <position position="149"/>
    </location>
    <ligand>
        <name>Mn(2+)</name>
        <dbReference type="ChEBI" id="CHEBI:29035"/>
    </ligand>
</feature>
<feature type="binding site" evidence="1">
    <location>
        <position position="151"/>
    </location>
    <ligand>
        <name>Mn(2+)</name>
        <dbReference type="ChEBI" id="CHEBI:29035"/>
    </ligand>
</feature>
<feature type="binding site" evidence="1">
    <location>
        <position position="153"/>
    </location>
    <ligand>
        <name>Mn(2+)</name>
        <dbReference type="ChEBI" id="CHEBI:29035"/>
    </ligand>
</feature>
<feature type="binding site" evidence="1">
    <location>
        <position position="230"/>
    </location>
    <ligand>
        <name>Mn(2+)</name>
        <dbReference type="ChEBI" id="CHEBI:29035"/>
    </ligand>
</feature>
<feature type="binding site" evidence="1">
    <location>
        <position position="232"/>
    </location>
    <ligand>
        <name>Mn(2+)</name>
        <dbReference type="ChEBI" id="CHEBI:29035"/>
    </ligand>
</feature>
<gene>
    <name evidence="1" type="primary">speB</name>
    <name type="ordered locus">SNSL254_A3324</name>
</gene>
<reference key="1">
    <citation type="journal article" date="2011" name="J. Bacteriol.">
        <title>Comparative genomics of 28 Salmonella enterica isolates: evidence for CRISPR-mediated adaptive sublineage evolution.</title>
        <authorList>
            <person name="Fricke W.F."/>
            <person name="Mammel M.K."/>
            <person name="McDermott P.F."/>
            <person name="Tartera C."/>
            <person name="White D.G."/>
            <person name="Leclerc J.E."/>
            <person name="Ravel J."/>
            <person name="Cebula T.A."/>
        </authorList>
    </citation>
    <scope>NUCLEOTIDE SEQUENCE [LARGE SCALE GENOMIC DNA]</scope>
    <source>
        <strain>SL254</strain>
    </source>
</reference>
<name>SPEB_SALNS</name>
<dbReference type="EC" id="3.5.3.11" evidence="1"/>
<dbReference type="EMBL" id="CP001113">
    <property type="protein sequence ID" value="ACF61915.1"/>
    <property type="molecule type" value="Genomic_DNA"/>
</dbReference>
<dbReference type="RefSeq" id="WP_000105550.1">
    <property type="nucleotide sequence ID" value="NZ_CCMR01000001.1"/>
</dbReference>
<dbReference type="SMR" id="B4T5I5"/>
<dbReference type="KEGG" id="see:SNSL254_A3324"/>
<dbReference type="HOGENOM" id="CLU_039478_0_0_6"/>
<dbReference type="UniPathway" id="UPA00534">
    <property type="reaction ID" value="UER00287"/>
</dbReference>
<dbReference type="Proteomes" id="UP000008824">
    <property type="component" value="Chromosome"/>
</dbReference>
<dbReference type="GO" id="GO:0008783">
    <property type="term" value="F:agmatinase activity"/>
    <property type="evidence" value="ECO:0007669"/>
    <property type="project" value="UniProtKB-UniRule"/>
</dbReference>
<dbReference type="GO" id="GO:0030145">
    <property type="term" value="F:manganese ion binding"/>
    <property type="evidence" value="ECO:0007669"/>
    <property type="project" value="InterPro"/>
</dbReference>
<dbReference type="GO" id="GO:0033389">
    <property type="term" value="P:putrescine biosynthetic process from arginine, via agmatine"/>
    <property type="evidence" value="ECO:0007669"/>
    <property type="project" value="TreeGrafter"/>
</dbReference>
<dbReference type="GO" id="GO:0008295">
    <property type="term" value="P:spermidine biosynthetic process"/>
    <property type="evidence" value="ECO:0007669"/>
    <property type="project" value="UniProtKB-UniRule"/>
</dbReference>
<dbReference type="CDD" id="cd11592">
    <property type="entry name" value="Agmatinase_PAH"/>
    <property type="match status" value="1"/>
</dbReference>
<dbReference type="FunFam" id="3.40.800.10:FF:000001">
    <property type="entry name" value="Agmatinase"/>
    <property type="match status" value="1"/>
</dbReference>
<dbReference type="Gene3D" id="3.40.800.10">
    <property type="entry name" value="Ureohydrolase domain"/>
    <property type="match status" value="1"/>
</dbReference>
<dbReference type="HAMAP" id="MF_01418">
    <property type="entry name" value="SpeB"/>
    <property type="match status" value="1"/>
</dbReference>
<dbReference type="InterPro" id="IPR023694">
    <property type="entry name" value="Agmatinase"/>
</dbReference>
<dbReference type="InterPro" id="IPR005925">
    <property type="entry name" value="Agmatinase-rel"/>
</dbReference>
<dbReference type="InterPro" id="IPR006035">
    <property type="entry name" value="Ureohydrolase"/>
</dbReference>
<dbReference type="InterPro" id="IPR023696">
    <property type="entry name" value="Ureohydrolase_dom_sf"/>
</dbReference>
<dbReference type="InterPro" id="IPR020855">
    <property type="entry name" value="Ureohydrolase_Mn_BS"/>
</dbReference>
<dbReference type="NCBIfam" id="TIGR01230">
    <property type="entry name" value="agmatinase"/>
    <property type="match status" value="1"/>
</dbReference>
<dbReference type="NCBIfam" id="NF002564">
    <property type="entry name" value="PRK02190.1"/>
    <property type="match status" value="1"/>
</dbReference>
<dbReference type="PANTHER" id="PTHR11358">
    <property type="entry name" value="ARGINASE/AGMATINASE"/>
    <property type="match status" value="1"/>
</dbReference>
<dbReference type="PANTHER" id="PTHR11358:SF26">
    <property type="entry name" value="GUANIDINO ACID HYDROLASE, MITOCHONDRIAL"/>
    <property type="match status" value="1"/>
</dbReference>
<dbReference type="Pfam" id="PF00491">
    <property type="entry name" value="Arginase"/>
    <property type="match status" value="1"/>
</dbReference>
<dbReference type="PIRSF" id="PIRSF036979">
    <property type="entry name" value="Arginase"/>
    <property type="match status" value="1"/>
</dbReference>
<dbReference type="SUPFAM" id="SSF52768">
    <property type="entry name" value="Arginase/deacetylase"/>
    <property type="match status" value="1"/>
</dbReference>
<dbReference type="PROSITE" id="PS01053">
    <property type="entry name" value="ARGINASE_1"/>
    <property type="match status" value="1"/>
</dbReference>
<dbReference type="PROSITE" id="PS51409">
    <property type="entry name" value="ARGINASE_2"/>
    <property type="match status" value="1"/>
</dbReference>
<comment type="function">
    <text evidence="1">Catalyzes the formation of putrescine from agmatine.</text>
</comment>
<comment type="catalytic activity">
    <reaction evidence="1">
        <text>agmatine + H2O = urea + putrescine</text>
        <dbReference type="Rhea" id="RHEA:13929"/>
        <dbReference type="ChEBI" id="CHEBI:15377"/>
        <dbReference type="ChEBI" id="CHEBI:16199"/>
        <dbReference type="ChEBI" id="CHEBI:58145"/>
        <dbReference type="ChEBI" id="CHEBI:326268"/>
        <dbReference type="EC" id="3.5.3.11"/>
    </reaction>
</comment>
<comment type="cofactor">
    <cofactor evidence="1">
        <name>Mn(2+)</name>
        <dbReference type="ChEBI" id="CHEBI:29035"/>
    </cofactor>
</comment>
<comment type="pathway">
    <text evidence="1">Amine and polyamine biosynthesis; putrescine biosynthesis via agmatine pathway; putrescine from agmatine: step 1/1.</text>
</comment>
<comment type="similarity">
    <text evidence="1">Belongs to the arginase family. Agmatinase subfamily.</text>
</comment>
<evidence type="ECO:0000255" key="1">
    <source>
        <dbReference type="HAMAP-Rule" id="MF_01418"/>
    </source>
</evidence>
<sequence>MSTLGHQYDNSLVSNAFGFLRLPMNFQPYDSDADWVITGVPFDMATSGRAGGRHGPAAIRQVSTNLAWEHHRFPWNFDMRERLNVVDCGDLVYAFGDAREMSEKLQAHAEKLLSAGKRMLSFGGDHFVTLPLLRAHAKHFGKMALVHFDAHTDTYANGCEFDHGTMFYTAPKEGLIDPHHSVQIGIRTEFDKDNGFTVLDACQVNDRGVDDILAQVKQIVGDMPVYLTFDIDCLDPAFAPGTGTPVIGGLTSDRAIKLVRGLKDLNIVGMDVVEVAPAYDQSEITALAAATLALEMLYIQAAKKGE</sequence>